<proteinExistence type="evidence at protein level"/>
<sequence>MPGLKITLLQQPLVWMDGPANLRHFDRQLEGITGRDVIVLPEMFTSGFAMEAAASSLAQDDVVNWMTAKAQQCNALIAGSVALQTESGSVNRFLLVEPGGTVHFYDKRHLFRMVDEHLHYKAGNARVIVEWRGWRILPLVCYDLRFPVWSRNLNDYDLALYVANWPAPRSLHWQALLTARAIENQAYVAGCNRVGSDGNGCHYRGDSRVINPQGEIIATADAHQATRIDAELSMAALREYREKFPAWQDADEFRLW</sequence>
<keyword id="KW-0378">Hydrolase</keyword>
<accession>A0A140NDS5</accession>
<organism>
    <name type="scientific">Escherichia coli (strain B / BL21-DE3)</name>
    <dbReference type="NCBI Taxonomy" id="469008"/>
    <lineage>
        <taxon>Bacteria</taxon>
        <taxon>Pseudomonadati</taxon>
        <taxon>Pseudomonadota</taxon>
        <taxon>Gammaproteobacteria</taxon>
        <taxon>Enterobacterales</taxon>
        <taxon>Enterobacteriaceae</taxon>
        <taxon>Escherichia</taxon>
    </lineage>
</organism>
<reference key="1">
    <citation type="submission" date="2009-07" db="EMBL/GenBank/DDBJ databases">
        <title>Complete sequence of Escherichia coli BL21(DE3).</title>
        <authorList>
            <person name="Lucas S."/>
            <person name="Copeland A."/>
            <person name="Lapidus A."/>
            <person name="Glavina del Rio T."/>
            <person name="Dalin E."/>
            <person name="Tice H."/>
            <person name="Bruce D."/>
            <person name="Goodwin L."/>
            <person name="Pitluck S."/>
            <person name="LaButti K.M."/>
            <person name="Clum A."/>
            <person name="Larimer F."/>
            <person name="Land M."/>
            <person name="Hauser L."/>
            <person name="Kyrpides N."/>
            <person name="Anderson I."/>
            <person name="Sorek R."/>
            <person name="Rubin E."/>
        </authorList>
    </citation>
    <scope>NUCLEOTIDE SEQUENCE [LARGE SCALE GENOMIC DNA]</scope>
    <source>
        <strain>B / BL21-DE3</strain>
    </source>
</reference>
<reference key="2">
    <citation type="journal article" date="2017" name="Proc. Natl. Acad. Sci. U.S.A.">
        <title>Nit1 is a metabolite repair enzyme that hydrolyzes deaminated glutathione.</title>
        <authorList>
            <person name="Peracchi A."/>
            <person name="Veiga-da-Cunha M."/>
            <person name="Kuhara T."/>
            <person name="Ellens K.W."/>
            <person name="Paczia N."/>
            <person name="Stroobant V."/>
            <person name="Seliga A.K."/>
            <person name="Marlaire S."/>
            <person name="Jaisson S."/>
            <person name="Bommer G.T."/>
            <person name="Sun J."/>
            <person name="Huebner K."/>
            <person name="Linster C.L."/>
            <person name="Cooper A.J.L."/>
            <person name="Van Schaftingen E."/>
        </authorList>
    </citation>
    <scope>FUNCTION</scope>
    <scope>CATALYTIC ACTIVITY</scope>
    <source>
        <strain>B / BL21</strain>
    </source>
</reference>
<comment type="function">
    <text evidence="2">Hydrolyzes alpha-ketoglutaramate (a-KGM) to alpha-ketoglutarate (alpha-KG) and ammonia (specific activity 6.65 umol/min/mg), has weak activity on L-glutamine, almost no activity on deaminated glutathione (dGSH) and none on glutathione. May function as a metabolite repair enzyme.</text>
</comment>
<comment type="catalytic activity">
    <reaction evidence="2">
        <text>a monoamide of a dicarboxylate + H2O = a dicarboxylate + NH4(+)</text>
        <dbReference type="Rhea" id="RHEA:11716"/>
        <dbReference type="ChEBI" id="CHEBI:15377"/>
        <dbReference type="ChEBI" id="CHEBI:28938"/>
        <dbReference type="ChEBI" id="CHEBI:28965"/>
        <dbReference type="ChEBI" id="CHEBI:77450"/>
        <dbReference type="EC" id="3.5.1.3"/>
    </reaction>
</comment>
<comment type="similarity">
    <text evidence="4">Belongs to the carbon-nitrogen hydrolase superfamily. NIT1/NIT2 family.</text>
</comment>
<evidence type="ECO:0000255" key="1">
    <source>
        <dbReference type="PROSITE-ProRule" id="PRU00054"/>
    </source>
</evidence>
<evidence type="ECO:0000269" key="2">
    <source>
    </source>
</evidence>
<evidence type="ECO:0000303" key="3">
    <source>
    </source>
</evidence>
<evidence type="ECO:0000305" key="4"/>
<dbReference type="EC" id="3.5.1.3" evidence="2"/>
<dbReference type="EMBL" id="CP001665">
    <property type="protein sequence ID" value="ACT30403.1"/>
    <property type="molecule type" value="Genomic_DNA"/>
</dbReference>
<dbReference type="RefSeq" id="WP_001118052.1">
    <property type="nucleotide sequence ID" value="NZ_JADXDS010000051.1"/>
</dbReference>
<dbReference type="SMR" id="A0A140NDS5"/>
<dbReference type="KEGG" id="ebd:ECBD_3403"/>
<dbReference type="KEGG" id="ebe:B21_00218"/>
<dbReference type="KEGG" id="ebl:ECD_00214"/>
<dbReference type="PATRIC" id="fig|469008.15.peg.218"/>
<dbReference type="eggNOG" id="COG0388">
    <property type="taxonomic scope" value="Bacteria"/>
</dbReference>
<dbReference type="HOGENOM" id="CLU_030130_3_7_6"/>
<dbReference type="GO" id="GO:0106008">
    <property type="term" value="F:2-oxoglutaramate amidase activity"/>
    <property type="evidence" value="ECO:0007669"/>
    <property type="project" value="TreeGrafter"/>
</dbReference>
<dbReference type="GO" id="GO:0050152">
    <property type="term" value="F:omega-amidase activity"/>
    <property type="evidence" value="ECO:0007669"/>
    <property type="project" value="UniProtKB-EC"/>
</dbReference>
<dbReference type="CDD" id="cd07575">
    <property type="entry name" value="Xc-1258_like"/>
    <property type="match status" value="1"/>
</dbReference>
<dbReference type="FunFam" id="3.60.110.10:FF:000004">
    <property type="entry name" value="Carbon-nitrogen hydrolase"/>
    <property type="match status" value="1"/>
</dbReference>
<dbReference type="Gene3D" id="3.60.110.10">
    <property type="entry name" value="Carbon-nitrogen hydrolase"/>
    <property type="match status" value="1"/>
</dbReference>
<dbReference type="InterPro" id="IPR003010">
    <property type="entry name" value="C-N_Hydrolase"/>
</dbReference>
<dbReference type="InterPro" id="IPR036526">
    <property type="entry name" value="C-N_Hydrolase_sf"/>
</dbReference>
<dbReference type="InterPro" id="IPR052737">
    <property type="entry name" value="Omega-amidase_YafV"/>
</dbReference>
<dbReference type="InterPro" id="IPR001110">
    <property type="entry name" value="UPF0012_CS"/>
</dbReference>
<dbReference type="NCBIfam" id="NF007757">
    <property type="entry name" value="PRK10438.1"/>
    <property type="match status" value="1"/>
</dbReference>
<dbReference type="PANTHER" id="PTHR47799">
    <property type="entry name" value="OMEGA-AMIDASE YAFV"/>
    <property type="match status" value="1"/>
</dbReference>
<dbReference type="PANTHER" id="PTHR47799:SF1">
    <property type="entry name" value="OMEGA-AMIDASE YAFV"/>
    <property type="match status" value="1"/>
</dbReference>
<dbReference type="Pfam" id="PF00795">
    <property type="entry name" value="CN_hydrolase"/>
    <property type="match status" value="1"/>
</dbReference>
<dbReference type="SUPFAM" id="SSF56317">
    <property type="entry name" value="Carbon-nitrogen hydrolase"/>
    <property type="match status" value="1"/>
</dbReference>
<dbReference type="PROSITE" id="PS50263">
    <property type="entry name" value="CN_HYDROLASE"/>
    <property type="match status" value="1"/>
</dbReference>
<dbReference type="PROSITE" id="PS01227">
    <property type="entry name" value="UPF0012"/>
    <property type="match status" value="1"/>
</dbReference>
<feature type="chain" id="PRO_0000440692" description="Omega-amidase YafV">
    <location>
        <begin position="1"/>
        <end position="256"/>
    </location>
</feature>
<feature type="domain" description="CN hydrolase" evidence="1">
    <location>
        <begin position="4"/>
        <end position="234"/>
    </location>
</feature>
<feature type="active site" description="Proton acceptor" evidence="1">
    <location>
        <position position="42"/>
    </location>
</feature>
<feature type="active site" evidence="1">
    <location>
        <position position="107"/>
    </location>
</feature>
<feature type="active site" description="Nucleophile" evidence="1">
    <location>
        <position position="141"/>
    </location>
</feature>
<name>YAFV_ECOBD</name>
<gene>
    <name type="primary">yafV</name>
    <name type="ordered locus">ECBD_3403</name>
</gene>
<protein>
    <recommendedName>
        <fullName>Omega-amidase YafV</fullName>
        <shortName evidence="3">ecYafV</shortName>
        <ecNumber evidence="2">3.5.1.3</ecNumber>
    </recommendedName>
</protein>